<feature type="chain" id="PRO_0000178942" description="UDP-N-acetylglucosamine 1-carboxyvinyltransferase">
    <location>
        <begin position="1"/>
        <end position="438"/>
    </location>
</feature>
<feature type="active site" description="Proton donor" evidence="1">
    <location>
        <position position="129"/>
    </location>
</feature>
<feature type="binding site" evidence="1">
    <location>
        <begin position="35"/>
        <end position="36"/>
    </location>
    <ligand>
        <name>phosphoenolpyruvate</name>
        <dbReference type="ChEBI" id="CHEBI:58702"/>
    </ligand>
</feature>
<feature type="binding site" evidence="1">
    <location>
        <position position="105"/>
    </location>
    <ligand>
        <name>UDP-N-acetyl-alpha-D-glucosamine</name>
        <dbReference type="ChEBI" id="CHEBI:57705"/>
    </ligand>
</feature>
<feature type="binding site" evidence="1">
    <location>
        <begin position="134"/>
        <end position="138"/>
    </location>
    <ligand>
        <name>UDP-N-acetyl-alpha-D-glucosamine</name>
        <dbReference type="ChEBI" id="CHEBI:57705"/>
    </ligand>
</feature>
<feature type="binding site" evidence="1">
    <location>
        <position position="321"/>
    </location>
    <ligand>
        <name>UDP-N-acetyl-alpha-D-glucosamine</name>
        <dbReference type="ChEBI" id="CHEBI:57705"/>
    </ligand>
</feature>
<feature type="binding site" evidence="1">
    <location>
        <position position="343"/>
    </location>
    <ligand>
        <name>UDP-N-acetyl-alpha-D-glucosamine</name>
        <dbReference type="ChEBI" id="CHEBI:57705"/>
    </ligand>
</feature>
<feature type="modified residue" description="2-(S-cysteinyl)pyruvic acid O-phosphothioketal" evidence="1">
    <location>
        <position position="129"/>
    </location>
</feature>
<keyword id="KW-0131">Cell cycle</keyword>
<keyword id="KW-0132">Cell division</keyword>
<keyword id="KW-0133">Cell shape</keyword>
<keyword id="KW-0961">Cell wall biogenesis/degradation</keyword>
<keyword id="KW-0963">Cytoplasm</keyword>
<keyword id="KW-0573">Peptidoglycan synthesis</keyword>
<keyword id="KW-0670">Pyruvate</keyword>
<keyword id="KW-1185">Reference proteome</keyword>
<keyword id="KW-0808">Transferase</keyword>
<accession>Q55673</accession>
<name>MURA_SYNY3</name>
<gene>
    <name evidence="1" type="primary">murA</name>
    <name type="synonym">murZ</name>
    <name type="ordered locus">slr0017</name>
</gene>
<organism>
    <name type="scientific">Synechocystis sp. (strain ATCC 27184 / PCC 6803 / Kazusa)</name>
    <dbReference type="NCBI Taxonomy" id="1111708"/>
    <lineage>
        <taxon>Bacteria</taxon>
        <taxon>Bacillati</taxon>
        <taxon>Cyanobacteriota</taxon>
        <taxon>Cyanophyceae</taxon>
        <taxon>Synechococcales</taxon>
        <taxon>Merismopediaceae</taxon>
        <taxon>Synechocystis</taxon>
    </lineage>
</organism>
<reference key="1">
    <citation type="journal article" date="1995" name="DNA Res.">
        <title>Sequence analysis of the genome of the unicellular cyanobacterium Synechocystis sp. strain PCC6803. I. Sequence features in the 1 Mb region from map positions 64% to 92% of the genome.</title>
        <authorList>
            <person name="Kaneko T."/>
            <person name="Tanaka A."/>
            <person name="Sato S."/>
            <person name="Kotani H."/>
            <person name="Sazuka T."/>
            <person name="Miyajima N."/>
            <person name="Sugiura M."/>
            <person name="Tabata S."/>
        </authorList>
    </citation>
    <scope>NUCLEOTIDE SEQUENCE [LARGE SCALE GENOMIC DNA]</scope>
    <source>
        <strain>ATCC 27184 / PCC 6803 / N-1</strain>
    </source>
</reference>
<reference key="2">
    <citation type="journal article" date="1996" name="DNA Res.">
        <title>Sequence analysis of the genome of the unicellular cyanobacterium Synechocystis sp. strain PCC6803. II. Sequence determination of the entire genome and assignment of potential protein-coding regions.</title>
        <authorList>
            <person name="Kaneko T."/>
            <person name="Sato S."/>
            <person name="Kotani H."/>
            <person name="Tanaka A."/>
            <person name="Asamizu E."/>
            <person name="Nakamura Y."/>
            <person name="Miyajima N."/>
            <person name="Hirosawa M."/>
            <person name="Sugiura M."/>
            <person name="Sasamoto S."/>
            <person name="Kimura T."/>
            <person name="Hosouchi T."/>
            <person name="Matsuno A."/>
            <person name="Muraki A."/>
            <person name="Nakazaki N."/>
            <person name="Naruo K."/>
            <person name="Okumura S."/>
            <person name="Shimpo S."/>
            <person name="Takeuchi C."/>
            <person name="Wada T."/>
            <person name="Watanabe A."/>
            <person name="Yamada M."/>
            <person name="Yasuda M."/>
            <person name="Tabata S."/>
        </authorList>
    </citation>
    <scope>NUCLEOTIDE SEQUENCE [LARGE SCALE GENOMIC DNA]</scope>
    <source>
        <strain>ATCC 27184 / PCC 6803 / Kazusa</strain>
    </source>
</reference>
<proteinExistence type="inferred from homology"/>
<comment type="function">
    <text evidence="1">Cell wall formation. Adds enolpyruvyl to UDP-N-acetylglucosamine.</text>
</comment>
<comment type="catalytic activity">
    <reaction evidence="1">
        <text>phosphoenolpyruvate + UDP-N-acetyl-alpha-D-glucosamine = UDP-N-acetyl-3-O-(1-carboxyvinyl)-alpha-D-glucosamine + phosphate</text>
        <dbReference type="Rhea" id="RHEA:18681"/>
        <dbReference type="ChEBI" id="CHEBI:43474"/>
        <dbReference type="ChEBI" id="CHEBI:57705"/>
        <dbReference type="ChEBI" id="CHEBI:58702"/>
        <dbReference type="ChEBI" id="CHEBI:68483"/>
        <dbReference type="EC" id="2.5.1.7"/>
    </reaction>
</comment>
<comment type="pathway">
    <text evidence="1">Cell wall biogenesis; peptidoglycan biosynthesis.</text>
</comment>
<comment type="subcellular location">
    <subcellularLocation>
        <location evidence="1">Cytoplasm</location>
    </subcellularLocation>
</comment>
<comment type="similarity">
    <text evidence="1">Belongs to the EPSP synthase family. MurA subfamily.</text>
</comment>
<dbReference type="EC" id="2.5.1.7" evidence="1"/>
<dbReference type="EMBL" id="BA000022">
    <property type="protein sequence ID" value="BAA10199.1"/>
    <property type="molecule type" value="Genomic_DNA"/>
</dbReference>
<dbReference type="PIR" id="S76347">
    <property type="entry name" value="S76347"/>
</dbReference>
<dbReference type="SMR" id="Q55673"/>
<dbReference type="FunCoup" id="Q55673">
    <property type="interactions" value="350"/>
</dbReference>
<dbReference type="STRING" id="1148.gene:10499696"/>
<dbReference type="PaxDb" id="1148-1001572"/>
<dbReference type="EnsemblBacteria" id="BAA10199">
    <property type="protein sequence ID" value="BAA10199"/>
    <property type="gene ID" value="BAA10199"/>
</dbReference>
<dbReference type="KEGG" id="syn:slr0017"/>
<dbReference type="eggNOG" id="COG0766">
    <property type="taxonomic scope" value="Bacteria"/>
</dbReference>
<dbReference type="InParanoid" id="Q55673"/>
<dbReference type="PhylomeDB" id="Q55673"/>
<dbReference type="UniPathway" id="UPA00219"/>
<dbReference type="Proteomes" id="UP000001425">
    <property type="component" value="Chromosome"/>
</dbReference>
<dbReference type="GO" id="GO:0005737">
    <property type="term" value="C:cytoplasm"/>
    <property type="evidence" value="ECO:0007669"/>
    <property type="project" value="UniProtKB-SubCell"/>
</dbReference>
<dbReference type="GO" id="GO:0008760">
    <property type="term" value="F:UDP-N-acetylglucosamine 1-carboxyvinyltransferase activity"/>
    <property type="evidence" value="ECO:0007669"/>
    <property type="project" value="UniProtKB-UniRule"/>
</dbReference>
<dbReference type="GO" id="GO:0051301">
    <property type="term" value="P:cell division"/>
    <property type="evidence" value="ECO:0007669"/>
    <property type="project" value="UniProtKB-KW"/>
</dbReference>
<dbReference type="GO" id="GO:0071555">
    <property type="term" value="P:cell wall organization"/>
    <property type="evidence" value="ECO:0007669"/>
    <property type="project" value="UniProtKB-KW"/>
</dbReference>
<dbReference type="GO" id="GO:0009252">
    <property type="term" value="P:peptidoglycan biosynthetic process"/>
    <property type="evidence" value="ECO:0007669"/>
    <property type="project" value="UniProtKB-UniRule"/>
</dbReference>
<dbReference type="GO" id="GO:0008360">
    <property type="term" value="P:regulation of cell shape"/>
    <property type="evidence" value="ECO:0007669"/>
    <property type="project" value="UniProtKB-KW"/>
</dbReference>
<dbReference type="GO" id="GO:0019277">
    <property type="term" value="P:UDP-N-acetylgalactosamine biosynthetic process"/>
    <property type="evidence" value="ECO:0007669"/>
    <property type="project" value="InterPro"/>
</dbReference>
<dbReference type="CDD" id="cd01555">
    <property type="entry name" value="UdpNAET"/>
    <property type="match status" value="1"/>
</dbReference>
<dbReference type="FunFam" id="3.65.10.10:FF:000001">
    <property type="entry name" value="UDP-N-acetylglucosamine 1-carboxyvinyltransferase"/>
    <property type="match status" value="1"/>
</dbReference>
<dbReference type="Gene3D" id="3.65.10.10">
    <property type="entry name" value="Enolpyruvate transferase domain"/>
    <property type="match status" value="2"/>
</dbReference>
<dbReference type="HAMAP" id="MF_00111">
    <property type="entry name" value="MurA"/>
    <property type="match status" value="1"/>
</dbReference>
<dbReference type="InterPro" id="IPR001986">
    <property type="entry name" value="Enolpyruvate_Tfrase_dom"/>
</dbReference>
<dbReference type="InterPro" id="IPR036968">
    <property type="entry name" value="Enolpyruvate_Tfrase_sf"/>
</dbReference>
<dbReference type="InterPro" id="IPR050068">
    <property type="entry name" value="MurA_subfamily"/>
</dbReference>
<dbReference type="InterPro" id="IPR013792">
    <property type="entry name" value="RNA3'P_cycl/enolpyr_Trfase_a/b"/>
</dbReference>
<dbReference type="InterPro" id="IPR005750">
    <property type="entry name" value="UDP_GlcNAc_COvinyl_MurA"/>
</dbReference>
<dbReference type="NCBIfam" id="TIGR01072">
    <property type="entry name" value="murA"/>
    <property type="match status" value="1"/>
</dbReference>
<dbReference type="NCBIfam" id="NF006873">
    <property type="entry name" value="PRK09369.1"/>
    <property type="match status" value="1"/>
</dbReference>
<dbReference type="PANTHER" id="PTHR43783">
    <property type="entry name" value="UDP-N-ACETYLGLUCOSAMINE 1-CARBOXYVINYLTRANSFERASE"/>
    <property type="match status" value="1"/>
</dbReference>
<dbReference type="PANTHER" id="PTHR43783:SF1">
    <property type="entry name" value="UDP-N-ACETYLGLUCOSAMINE 1-CARBOXYVINYLTRANSFERASE"/>
    <property type="match status" value="1"/>
</dbReference>
<dbReference type="Pfam" id="PF00275">
    <property type="entry name" value="EPSP_synthase"/>
    <property type="match status" value="1"/>
</dbReference>
<dbReference type="SUPFAM" id="SSF55205">
    <property type="entry name" value="EPT/RTPC-like"/>
    <property type="match status" value="1"/>
</dbReference>
<evidence type="ECO:0000255" key="1">
    <source>
        <dbReference type="HAMAP-Rule" id="MF_00111"/>
    </source>
</evidence>
<sequence length="438" mass="46605">MLQVATPTATEETQTVIEIEGRASLKGEVRISGAKNSALAIMAGTILCSDDCRLSNLPALADIDKMCQILAAIGVNLERDGDRLVVDSSNVGHGPAPYELVSQLRASFFVIGPLLSRLGMTKVPLPGGCAIGTRPVDLHVRGLQAMGADVHIEHGVVNASIKGHSRRLTGAKIYLDYPSVGATETILMAATLAEGETVIDNAAREPEIVDLANFCRSMGAQIRGDGSSRIIINGVEKLHSTDFPIIPDRIEAATFLCAGAITHSEISLFPVVPDHLASAIAKLREIGPEVAIDAPDRVRLIPRDLRGTDIETLPYPGFPTDMQAQFMALLAVSEGNSVVTETVFENRLQHVAELQRMGANIKLKGNAAFIQGVPFLSGAPVMSTDLRASAALVIAGLAAEGKTIVQGLRHLDRGYEDIEGKLRKLGAKLTRIEQPVTL</sequence>
<protein>
    <recommendedName>
        <fullName evidence="1">UDP-N-acetylglucosamine 1-carboxyvinyltransferase</fullName>
        <ecNumber evidence="1">2.5.1.7</ecNumber>
    </recommendedName>
    <alternativeName>
        <fullName evidence="1">Enoylpyruvate transferase</fullName>
    </alternativeName>
    <alternativeName>
        <fullName evidence="1">UDP-N-acetylglucosamine enolpyruvyl transferase</fullName>
        <shortName evidence="1">EPT</shortName>
    </alternativeName>
</protein>